<gene>
    <name type="primary">pgxC</name>
    <name type="ORF">ATEG_01601</name>
</gene>
<comment type="function">
    <text evidence="1">Specific in hydrolyzing the terminal glycosidic bond of polygalacturonic acid and oligogalacturonates.</text>
</comment>
<comment type="catalytic activity">
    <reaction>
        <text>[(1-&gt;4)-alpha-D-galacturonosyl](n) + H2O = alpha-D-galacturonate + [(1-&gt;4)-alpha-D-galacturonosyl](n-1)</text>
        <dbReference type="Rhea" id="RHEA:14117"/>
        <dbReference type="Rhea" id="RHEA-COMP:14570"/>
        <dbReference type="Rhea" id="RHEA-COMP:14572"/>
        <dbReference type="ChEBI" id="CHEBI:15377"/>
        <dbReference type="ChEBI" id="CHEBI:58658"/>
        <dbReference type="ChEBI" id="CHEBI:140523"/>
        <dbReference type="EC" id="3.2.1.67"/>
    </reaction>
</comment>
<comment type="subcellular location">
    <subcellularLocation>
        <location evidence="1">Secreted</location>
    </subcellularLocation>
</comment>
<comment type="similarity">
    <text evidence="3">Belongs to the glycosyl hydrolase 28 family.</text>
</comment>
<proteinExistence type="inferred from homology"/>
<accession>Q0CXI3</accession>
<dbReference type="EC" id="3.2.1.67"/>
<dbReference type="EMBL" id="CH476595">
    <property type="protein sequence ID" value="EAU38358.1"/>
    <property type="molecule type" value="Genomic_DNA"/>
</dbReference>
<dbReference type="RefSeq" id="XP_001208966.1">
    <property type="nucleotide sequence ID" value="XM_001208966.1"/>
</dbReference>
<dbReference type="SMR" id="Q0CXI3"/>
<dbReference type="STRING" id="341663.Q0CXI3"/>
<dbReference type="GlyCosmos" id="Q0CXI3">
    <property type="glycosylation" value="8 sites, No reported glycans"/>
</dbReference>
<dbReference type="EnsemblFungi" id="EAU38358">
    <property type="protein sequence ID" value="EAU38358"/>
    <property type="gene ID" value="ATEG_01601"/>
</dbReference>
<dbReference type="GeneID" id="4316238"/>
<dbReference type="VEuPathDB" id="FungiDB:ATEG_01601"/>
<dbReference type="eggNOG" id="ENOG502SI66">
    <property type="taxonomic scope" value="Eukaryota"/>
</dbReference>
<dbReference type="HOGENOM" id="CLU_016031_1_2_1"/>
<dbReference type="OMA" id="RFKSWIG"/>
<dbReference type="OrthoDB" id="187139at2759"/>
<dbReference type="Proteomes" id="UP000007963">
    <property type="component" value="Unassembled WGS sequence"/>
</dbReference>
<dbReference type="GO" id="GO:0005576">
    <property type="term" value="C:extracellular region"/>
    <property type="evidence" value="ECO:0000250"/>
    <property type="project" value="UniProtKB"/>
</dbReference>
<dbReference type="GO" id="GO:0047911">
    <property type="term" value="F:galacturan 1,4-alpha-galacturonidase activity"/>
    <property type="evidence" value="ECO:0007669"/>
    <property type="project" value="UniProtKB-EC"/>
</dbReference>
<dbReference type="GO" id="GO:0004650">
    <property type="term" value="F:polygalacturonase activity"/>
    <property type="evidence" value="ECO:0000250"/>
    <property type="project" value="UniProtKB"/>
</dbReference>
<dbReference type="GO" id="GO:0071555">
    <property type="term" value="P:cell wall organization"/>
    <property type="evidence" value="ECO:0007669"/>
    <property type="project" value="UniProtKB-KW"/>
</dbReference>
<dbReference type="GO" id="GO:0045490">
    <property type="term" value="P:pectin catabolic process"/>
    <property type="evidence" value="ECO:0000250"/>
    <property type="project" value="UniProtKB"/>
</dbReference>
<dbReference type="FunFam" id="2.160.20.10:FF:000037">
    <property type="entry name" value="Probable exopolygalacturonase C"/>
    <property type="match status" value="1"/>
</dbReference>
<dbReference type="Gene3D" id="2.160.20.10">
    <property type="entry name" value="Single-stranded right-handed beta-helix, Pectin lyase-like"/>
    <property type="match status" value="1"/>
</dbReference>
<dbReference type="InterPro" id="IPR000743">
    <property type="entry name" value="Glyco_hydro_28"/>
</dbReference>
<dbReference type="InterPro" id="IPR012334">
    <property type="entry name" value="Pectin_lyas_fold"/>
</dbReference>
<dbReference type="InterPro" id="IPR011050">
    <property type="entry name" value="Pectin_lyase_fold/virulence"/>
</dbReference>
<dbReference type="PANTHER" id="PTHR31736">
    <property type="match status" value="1"/>
</dbReference>
<dbReference type="PANTHER" id="PTHR31736:SF11">
    <property type="entry name" value="EXOPOLYGALACTURONASE C-RELATED"/>
    <property type="match status" value="1"/>
</dbReference>
<dbReference type="Pfam" id="PF00295">
    <property type="entry name" value="Glyco_hydro_28"/>
    <property type="match status" value="1"/>
</dbReference>
<dbReference type="SUPFAM" id="SSF51126">
    <property type="entry name" value="Pectin lyase-like"/>
    <property type="match status" value="1"/>
</dbReference>
<reference key="1">
    <citation type="submission" date="2005-09" db="EMBL/GenBank/DDBJ databases">
        <title>Annotation of the Aspergillus terreus NIH2624 genome.</title>
        <authorList>
            <person name="Birren B.W."/>
            <person name="Lander E.S."/>
            <person name="Galagan J.E."/>
            <person name="Nusbaum C."/>
            <person name="Devon K."/>
            <person name="Henn M."/>
            <person name="Ma L.-J."/>
            <person name="Jaffe D.B."/>
            <person name="Butler J."/>
            <person name="Alvarez P."/>
            <person name="Gnerre S."/>
            <person name="Grabherr M."/>
            <person name="Kleber M."/>
            <person name="Mauceli E.W."/>
            <person name="Brockman W."/>
            <person name="Rounsley S."/>
            <person name="Young S.K."/>
            <person name="LaButti K."/>
            <person name="Pushparaj V."/>
            <person name="DeCaprio D."/>
            <person name="Crawford M."/>
            <person name="Koehrsen M."/>
            <person name="Engels R."/>
            <person name="Montgomery P."/>
            <person name="Pearson M."/>
            <person name="Howarth C."/>
            <person name="Larson L."/>
            <person name="Luoma S."/>
            <person name="White J."/>
            <person name="Alvarado L."/>
            <person name="Kodira C.D."/>
            <person name="Zeng Q."/>
            <person name="Oleary S."/>
            <person name="Yandava C."/>
            <person name="Denning D.W."/>
            <person name="Nierman W.C."/>
            <person name="Milne T."/>
            <person name="Madden K."/>
        </authorList>
    </citation>
    <scope>NUCLEOTIDE SEQUENCE [LARGE SCALE GENOMIC DNA]</scope>
    <source>
        <strain>NIH 2624 / FGSC A1156</strain>
    </source>
</reference>
<evidence type="ECO:0000250" key="1"/>
<evidence type="ECO:0000255" key="2"/>
<evidence type="ECO:0000305" key="3"/>
<organism>
    <name type="scientific">Aspergillus terreus (strain NIH 2624 / FGSC A1156)</name>
    <dbReference type="NCBI Taxonomy" id="341663"/>
    <lineage>
        <taxon>Eukaryota</taxon>
        <taxon>Fungi</taxon>
        <taxon>Dikarya</taxon>
        <taxon>Ascomycota</taxon>
        <taxon>Pezizomycotina</taxon>
        <taxon>Eurotiomycetes</taxon>
        <taxon>Eurotiomycetidae</taxon>
        <taxon>Eurotiales</taxon>
        <taxon>Aspergillaceae</taxon>
        <taxon>Aspergillus</taxon>
        <taxon>Aspergillus subgen. Circumdati</taxon>
    </lineage>
</organism>
<sequence length="432" mass="47632">MPISKGIFLSLLSTLPLALAGHRSHRCVVPSSNGTRDDSPAIAKVFAQCATDSIIVFQEGVDYNVFQPIKAENLSNVEIRMHGNLHLPQNISAVQEIVKAGNSYWFTLEGPRVDWTGSEDINHGWINSYGQAWWDANPPNGTGIENRPHLLSYTTSDATIKYMRSRKPIAHNCRLHGDDITVTHAIVDAYSTGGFPFNTDGFDVAGTNIRISDSVMYNGDDAIAVGSGSHDIVFERNTIGYQSHGMSIGSLGKDPTDFANITNLRFEDVTVIDALYAARFKSWTGGQGLVKNVTWKNIRVFNVTFPIFVTQSYWDQGANRGDVDESSSVMMEDFTWSDFTGSINTYQPGDGSCASDPCWYNAGLPNLQHTEAIILECNTATSCKNFVTENIQLYPQSMDAPHLICMNATAELNPRLGFDCRNGMYTALSERH</sequence>
<keyword id="KW-0961">Cell wall biogenesis/degradation</keyword>
<keyword id="KW-1015">Disulfide bond</keyword>
<keyword id="KW-0325">Glycoprotein</keyword>
<keyword id="KW-0326">Glycosidase</keyword>
<keyword id="KW-0378">Hydrolase</keyword>
<keyword id="KW-1185">Reference proteome</keyword>
<keyword id="KW-0677">Repeat</keyword>
<keyword id="KW-0964">Secreted</keyword>
<keyword id="KW-0732">Signal</keyword>
<name>PGXC_ASPTN</name>
<feature type="signal peptide" evidence="2">
    <location>
        <begin position="1"/>
        <end position="20"/>
    </location>
</feature>
<feature type="chain" id="PRO_0000393688" description="Probable exopolygalacturonase C">
    <location>
        <begin position="21"/>
        <end position="432"/>
    </location>
</feature>
<feature type="repeat" description="PbH1 1">
    <location>
        <begin position="206"/>
        <end position="227"/>
    </location>
</feature>
<feature type="repeat" description="PbH1 2">
    <location>
        <begin position="229"/>
        <end position="250"/>
    </location>
</feature>
<feature type="repeat" description="PbH1 3">
    <location>
        <begin position="261"/>
        <end position="282"/>
    </location>
</feature>
<feature type="active site" description="Proton donor" evidence="1">
    <location>
        <position position="220"/>
    </location>
</feature>
<feature type="active site" evidence="1">
    <location>
        <position position="244"/>
    </location>
</feature>
<feature type="glycosylation site" description="N-linked (GlcNAc...) asparagine" evidence="2">
    <location>
        <position position="33"/>
    </location>
</feature>
<feature type="glycosylation site" description="N-linked (GlcNAc...) asparagine" evidence="2">
    <location>
        <position position="73"/>
    </location>
</feature>
<feature type="glycosylation site" description="N-linked (GlcNAc...) asparagine" evidence="2">
    <location>
        <position position="90"/>
    </location>
</feature>
<feature type="glycosylation site" description="N-linked (GlcNAc...) asparagine" evidence="2">
    <location>
        <position position="140"/>
    </location>
</feature>
<feature type="glycosylation site" description="N-linked (GlcNAc...) asparagine" evidence="2">
    <location>
        <position position="260"/>
    </location>
</feature>
<feature type="glycosylation site" description="N-linked (GlcNAc...) asparagine" evidence="2">
    <location>
        <position position="292"/>
    </location>
</feature>
<feature type="glycosylation site" description="N-linked (GlcNAc...) asparagine" evidence="2">
    <location>
        <position position="302"/>
    </location>
</feature>
<feature type="glycosylation site" description="N-linked (GlcNAc...) asparagine" evidence="2">
    <location>
        <position position="407"/>
    </location>
</feature>
<feature type="disulfide bond" evidence="1">
    <location>
        <begin position="377"/>
        <end position="383"/>
    </location>
</feature>
<protein>
    <recommendedName>
        <fullName>Probable exopolygalacturonase C</fullName>
        <ecNumber>3.2.1.67</ecNumber>
    </recommendedName>
    <alternativeName>
        <fullName>Galacturan 1,4-alpha-galacturonidase C</fullName>
    </alternativeName>
    <alternativeName>
        <fullName>Poly(1,4-alpha-D-galacturonide)galacturonohydrolase C</fullName>
    </alternativeName>
</protein>